<comment type="function">
    <text evidence="1">Binds to sialic acid-containing receptors on the cell surface, bringing about the attachment of the virus particle to the cell. This attachment induces virion internalization either through clathrin-dependent endocytosis or through clathrin- and caveolin-independent pathway. Plays a major role in the determination of host range restriction and virulence. Class I viral fusion protein. Responsible for penetration of the virus into the cell cytoplasm by mediating the fusion of the membrane of the endocytosed virus particle with the endosomal membrane. Low pH in endosomes induces an irreversible conformational change in HA2, releasing the fusion hydrophobic peptide. Several trimers are required to form a competent fusion pore.</text>
</comment>
<comment type="subunit">
    <text evidence="1">Homotrimer of disulfide-linked HA1-HA2.</text>
</comment>
<comment type="subcellular location">
    <subcellularLocation>
        <location evidence="1">Virion membrane</location>
        <topology evidence="1">Single-pass type I membrane protein</topology>
    </subcellularLocation>
    <subcellularLocation>
        <location evidence="1">Host apical cell membrane</location>
        <topology evidence="1">Single-pass type I membrane protein</topology>
    </subcellularLocation>
    <text evidence="1">Targeted to the apical plasma membrane in epithelial polarized cells through a signal present in the transmembrane domain. Associated with glycosphingolipid- and cholesterol-enriched detergent-resistant lipid rafts.</text>
</comment>
<comment type="PTM">
    <text evidence="1">Palmitoylated.</text>
</comment>
<comment type="PTM">
    <text evidence="1">In natural infection, inactive HA is matured into HA1 and HA2 outside the cell by one or more trypsin-like, arginine-specific endoprotease secreted by the bronchial epithelial cells. One identified protease that may be involved in this process is secreted in lungs by club cells.</text>
</comment>
<comment type="miscellaneous">
    <text>Major glycoprotein, comprises over 80% of the envelope proteins present in virus particle.</text>
</comment>
<comment type="miscellaneous">
    <text>The extent of infection into host organism is determined by HA. Influenza viruses bud from the apical surface of polarized epithelial cells (e.g. bronchial epithelial cells) into lumen of lungs and are therefore usually pneumotropic. The reason is that HA is cleaved by tryptase clara which is restricted to lungs. However, HAs of H5 and H7 pantropic avian viruses subtypes can be cleaved by furin and subtilisin-type enzymes, allowing the virus to grow in other organs than lungs.</text>
</comment>
<comment type="miscellaneous">
    <text>The influenza A genome consist of 8 RNA segments. Genetic variation of hemagglutinin and/or neuraminidase genes results in the emergence of new influenza strains. The mechanism of variation can be the result of point mutations or the result of genetic reassortment between segments of two different strains.</text>
</comment>
<comment type="similarity">
    <text evidence="1">Belongs to the influenza viruses hemagglutinin family.</text>
</comment>
<accession>Q2F4V2</accession>
<dbReference type="EMBL" id="DQ320896">
    <property type="protein sequence ID" value="ABC66538.1"/>
    <property type="molecule type" value="Genomic_RNA"/>
</dbReference>
<dbReference type="PDB" id="3FKU">
    <property type="method" value="X-ray"/>
    <property type="resolution" value="3.20 A"/>
    <property type="chains" value="B/D/F/H/J/L=346-522"/>
</dbReference>
<dbReference type="PDB" id="3MGO">
    <property type="method" value="X-ray"/>
    <property type="resolution" value="2.30 A"/>
    <property type="chains" value="C/F/I/L=205-214"/>
</dbReference>
<dbReference type="PDBsum" id="3FKU"/>
<dbReference type="PDBsum" id="3MGO"/>
<dbReference type="SMR" id="Q2F4V2"/>
<dbReference type="GlyCosmos" id="Q2F4V2">
    <property type="glycosylation" value="6 sites, No reported glycans"/>
</dbReference>
<dbReference type="EvolutionaryTrace" id="Q2F4V2"/>
<dbReference type="GO" id="GO:0020002">
    <property type="term" value="C:host cell plasma membrane"/>
    <property type="evidence" value="ECO:0007669"/>
    <property type="project" value="UniProtKB-SubCell"/>
</dbReference>
<dbReference type="GO" id="GO:0016020">
    <property type="term" value="C:membrane"/>
    <property type="evidence" value="ECO:0007669"/>
    <property type="project" value="UniProtKB-KW"/>
</dbReference>
<dbReference type="GO" id="GO:0019031">
    <property type="term" value="C:viral envelope"/>
    <property type="evidence" value="ECO:0007669"/>
    <property type="project" value="UniProtKB-KW"/>
</dbReference>
<dbReference type="GO" id="GO:0055036">
    <property type="term" value="C:virion membrane"/>
    <property type="evidence" value="ECO:0007669"/>
    <property type="project" value="UniProtKB-SubCell"/>
</dbReference>
<dbReference type="GO" id="GO:0046789">
    <property type="term" value="F:host cell surface receptor binding"/>
    <property type="evidence" value="ECO:0007669"/>
    <property type="project" value="InterPro"/>
</dbReference>
<dbReference type="GO" id="GO:0075512">
    <property type="term" value="P:clathrin-dependent endocytosis of virus by host cell"/>
    <property type="evidence" value="ECO:0007669"/>
    <property type="project" value="UniProtKB-KW"/>
</dbReference>
<dbReference type="GO" id="GO:0039654">
    <property type="term" value="P:fusion of virus membrane with host endosome membrane"/>
    <property type="evidence" value="ECO:0007669"/>
    <property type="project" value="UniProtKB-KW"/>
</dbReference>
<dbReference type="GO" id="GO:0019064">
    <property type="term" value="P:fusion of virus membrane with host plasma membrane"/>
    <property type="evidence" value="ECO:0007669"/>
    <property type="project" value="InterPro"/>
</dbReference>
<dbReference type="GO" id="GO:0019062">
    <property type="term" value="P:virion attachment to host cell"/>
    <property type="evidence" value="ECO:0007669"/>
    <property type="project" value="UniProtKB-KW"/>
</dbReference>
<dbReference type="FunFam" id="3.90.209.20:FF:000001">
    <property type="entry name" value="Hemagglutinin"/>
    <property type="match status" value="1"/>
</dbReference>
<dbReference type="Gene3D" id="3.90.20.10">
    <property type="match status" value="1"/>
</dbReference>
<dbReference type="Gene3D" id="3.90.209.20">
    <property type="match status" value="1"/>
</dbReference>
<dbReference type="HAMAP" id="MF_04072">
    <property type="entry name" value="INFV_HEMA"/>
    <property type="match status" value="1"/>
</dbReference>
<dbReference type="InterPro" id="IPR008980">
    <property type="entry name" value="Capsid_hemagglutn"/>
</dbReference>
<dbReference type="InterPro" id="IPR013828">
    <property type="entry name" value="Hemagglutn_HA1_a/b_dom_sf"/>
</dbReference>
<dbReference type="InterPro" id="IPR000149">
    <property type="entry name" value="Hemagglutn_influenz_A"/>
</dbReference>
<dbReference type="InterPro" id="IPR001364">
    <property type="entry name" value="Hemagglutn_influenz_A/B"/>
</dbReference>
<dbReference type="Pfam" id="PF00509">
    <property type="entry name" value="Hemagglutinin"/>
    <property type="match status" value="1"/>
</dbReference>
<dbReference type="PRINTS" id="PR00330">
    <property type="entry name" value="HEMAGGLUTN1"/>
</dbReference>
<dbReference type="PRINTS" id="PR00329">
    <property type="entry name" value="HEMAGGLUTN12"/>
</dbReference>
<dbReference type="SUPFAM" id="SSF58064">
    <property type="entry name" value="Influenza hemagglutinin (stalk)"/>
    <property type="match status" value="1"/>
</dbReference>
<dbReference type="SUPFAM" id="SSF49818">
    <property type="entry name" value="Viral protein domain"/>
    <property type="match status" value="1"/>
</dbReference>
<proteinExistence type="evidence at protein level"/>
<sequence>MEKIVLLLAIVSLVKSDQICIGYHANNSTEQVDTIMEKNVTVTHAQDILEKTHNGKLCDLDGVKPLILRDCSVAGWLLGNPMCDEFINVPEWSYIVEKANPANDLCYPGNFNDYEELKHLLSRINHFEKIQIIPKSSWSDHEASLGVSSACPYQGSSSFFRNVVWLIKKNNAYPTIKRSYNNTNQEDLLVLWGIHHPNDEAEQTRLYQNPTTYISIGTSTLNQRLVPKIATRSKVNGQSGRMDFFWTILKPNDAINFESNGNFIAPEYAYKIVKKGDSAIMKSEVEYGNCNTKCQTPMGAINSSMPFHNIHPLTIGECPKYVKSNKLVLATGLRNSPQRERRRKRGLFGAIAGFIEGGWQGMVDGWYGYHHSNEQGSGYAADKESTQKAIDGVTNKVNSIIDKMNTQFEAVGREFNNLERRIENLNKKMEDGFLDVWTYNAELLVLMENERTLDFHDSNVKNLYDKVRLQLRDNAKELGNGCFEFYHKCDNECMESVRNGTYDYPQYSEEARLKREEISGVKLESIGTYQILSIYSTVASSLVLAIMVAGLSLWMCSNGSLQCRI</sequence>
<feature type="signal peptide" evidence="1">
    <location>
        <begin position="1"/>
        <end position="16"/>
    </location>
</feature>
<feature type="chain" id="PRO_0000440834" description="Hemagglutinin" evidence="1">
    <location>
        <begin position="17"/>
        <end position="565"/>
    </location>
</feature>
<feature type="chain" id="PRO_0000440835" description="Hemagglutinin HA1 chain" evidence="1">
    <location>
        <begin position="17"/>
        <end position="345"/>
    </location>
</feature>
<feature type="chain" id="PRO_0000440836" description="Hemagglutinin HA2 chain" evidence="1">
    <location>
        <begin position="346"/>
        <end position="565"/>
    </location>
</feature>
<feature type="topological domain" description="Extracellular" evidence="1">
    <location>
        <begin position="17"/>
        <end position="530"/>
    </location>
</feature>
<feature type="transmembrane region" description="Helical" evidence="1">
    <location>
        <begin position="531"/>
        <end position="551"/>
    </location>
</feature>
<feature type="topological domain" description="Cytoplasmic" evidence="1">
    <location>
        <begin position="552"/>
        <end position="565"/>
    </location>
</feature>
<feature type="site" description="Cleavage; by host" evidence="1">
    <location>
        <begin position="345"/>
        <end position="346"/>
    </location>
</feature>
<feature type="lipid moiety-binding region" description="S-palmitoyl cysteine; by host" evidence="1">
    <location>
        <position position="556"/>
    </location>
</feature>
<feature type="lipid moiety-binding region" description="S-palmitoyl cysteine; by host" evidence="1">
    <location>
        <position position="563"/>
    </location>
</feature>
<feature type="glycosylation site" description="N-linked (GlcNAc...) asparagine; by host" evidence="1">
    <location>
        <position position="26"/>
    </location>
</feature>
<feature type="glycosylation site" description="N-linked (GlcNAc...) asparagine; by host" evidence="1">
    <location>
        <position position="27"/>
    </location>
</feature>
<feature type="glycosylation site" description="N-linked (GlcNAc...) asparagine; by host" evidence="1">
    <location>
        <position position="39"/>
    </location>
</feature>
<feature type="glycosylation site" description="N-linked (GlcNAc...) asparagine; by host" evidence="1">
    <location>
        <position position="181"/>
    </location>
</feature>
<feature type="glycosylation site" description="N-linked (GlcNAc...) asparagine; by host" evidence="1">
    <location>
        <position position="302"/>
    </location>
</feature>
<feature type="glycosylation site" description="N-linked (GlcNAc...) asparagine; by host" evidence="1">
    <location>
        <position position="499"/>
    </location>
</feature>
<feature type="disulfide bond" description="Interchain (between HA1 and HA2 chains)" evidence="1">
    <location>
        <begin position="20"/>
        <end position="482"/>
    </location>
</feature>
<feature type="disulfide bond" evidence="1">
    <location>
        <begin position="58"/>
        <end position="290"/>
    </location>
</feature>
<feature type="disulfide bond" evidence="1">
    <location>
        <begin position="71"/>
        <end position="83"/>
    </location>
</feature>
<feature type="disulfide bond" evidence="1">
    <location>
        <begin position="106"/>
        <end position="151"/>
    </location>
</feature>
<feature type="disulfide bond" evidence="1">
    <location>
        <begin position="294"/>
        <end position="318"/>
    </location>
</feature>
<feature type="disulfide bond" evidence="1">
    <location>
        <begin position="489"/>
        <end position="493"/>
    </location>
</feature>
<feature type="non-terminal residue">
    <location>
        <position position="565"/>
    </location>
</feature>
<reference key="1">
    <citation type="journal article" date="2006" name="Proc. Natl. Acad. Sci. U.S.A.">
        <title>Emergence and predominance of an H5N1 influenza variant in China.</title>
        <authorList>
            <person name="Smith G.J."/>
            <person name="Fan X.H."/>
            <person name="Wang J."/>
            <person name="Li K.S."/>
            <person name="Qin K."/>
            <person name="Zhang J.X."/>
            <person name="Vijaykrishna D."/>
            <person name="Cheung C.L."/>
            <person name="Huang K."/>
            <person name="Rayner J.M."/>
            <person name="Peiris J.S."/>
            <person name="Chen H."/>
            <person name="Webster R.G."/>
            <person name="Guan Y."/>
        </authorList>
    </citation>
    <scope>NUCLEOTIDE SEQUENCE [GENOMIC RNA]</scope>
</reference>
<organism>
    <name type="scientific">Influenza A virus (strain A/Goose/Guangxi/345/2005 H5N1 genotype G)</name>
    <dbReference type="NCBI Taxonomy" id="365089"/>
    <lineage>
        <taxon>Viruses</taxon>
        <taxon>Riboviria</taxon>
        <taxon>Orthornavirae</taxon>
        <taxon>Negarnaviricota</taxon>
        <taxon>Polyploviricotina</taxon>
        <taxon>Insthoviricetes</taxon>
        <taxon>Articulavirales</taxon>
        <taxon>Orthomyxoviridae</taxon>
        <taxon>Alphainfluenzavirus</taxon>
        <taxon>Alphainfluenzavirus influenzae</taxon>
        <taxon>Influenza A virus</taxon>
    </lineage>
</organism>
<gene>
    <name evidence="1" type="primary">HA</name>
</gene>
<organismHost>
    <name type="scientific">Aves</name>
    <dbReference type="NCBI Taxonomy" id="8782"/>
</organismHost>
<organismHost>
    <name type="scientific">Felis catus</name>
    <name type="common">Cat</name>
    <name type="synonym">Felis silvestris catus</name>
    <dbReference type="NCBI Taxonomy" id="9685"/>
</organismHost>
<organismHost>
    <name type="scientific">Homo sapiens</name>
    <name type="common">Human</name>
    <dbReference type="NCBI Taxonomy" id="9606"/>
</organismHost>
<organismHost>
    <name type="scientific">Panthera pardus</name>
    <name type="common">Leopard</name>
    <name type="synonym">Felis pardus</name>
    <dbReference type="NCBI Taxonomy" id="9691"/>
</organismHost>
<organismHost>
    <name type="scientific">Panthera tigris</name>
    <name type="common">Tiger</name>
    <dbReference type="NCBI Taxonomy" id="9694"/>
</organismHost>
<organismHost>
    <name type="scientific">Sus scrofa</name>
    <name type="common">Pig</name>
    <dbReference type="NCBI Taxonomy" id="9823"/>
</organismHost>
<evidence type="ECO:0000255" key="1">
    <source>
        <dbReference type="HAMAP-Rule" id="MF_04072"/>
    </source>
</evidence>
<keyword id="KW-0002">3D-structure</keyword>
<keyword id="KW-1167">Clathrin- and caveolin-independent endocytosis of virus by host</keyword>
<keyword id="KW-1165">Clathrin-mediated endocytosis of virus by host</keyword>
<keyword id="KW-1015">Disulfide bond</keyword>
<keyword id="KW-1170">Fusion of virus membrane with host endosomal membrane</keyword>
<keyword id="KW-1168">Fusion of virus membrane with host membrane</keyword>
<keyword id="KW-0325">Glycoprotein</keyword>
<keyword id="KW-0348">Hemagglutinin</keyword>
<keyword id="KW-1032">Host cell membrane</keyword>
<keyword id="KW-1043">Host membrane</keyword>
<keyword id="KW-0945">Host-virus interaction</keyword>
<keyword id="KW-0449">Lipoprotein</keyword>
<keyword id="KW-0472">Membrane</keyword>
<keyword id="KW-0564">Palmitate</keyword>
<keyword id="KW-0732">Signal</keyword>
<keyword id="KW-0812">Transmembrane</keyword>
<keyword id="KW-1133">Transmembrane helix</keyword>
<keyword id="KW-1161">Viral attachment to host cell</keyword>
<keyword id="KW-0261">Viral envelope protein</keyword>
<keyword id="KW-1162">Viral penetration into host cytoplasm</keyword>
<keyword id="KW-0946">Virion</keyword>
<keyword id="KW-1164">Virus endocytosis by host</keyword>
<keyword id="KW-1160">Virus entry into host cell</keyword>
<name>HEMA_I05A1</name>
<protein>
    <recommendedName>
        <fullName evidence="1">Hemagglutinin</fullName>
    </recommendedName>
    <component>
        <recommendedName>
            <fullName evidence="1">Hemagglutinin HA1 chain</fullName>
        </recommendedName>
    </component>
    <component>
        <recommendedName>
            <fullName evidence="1">Hemagglutinin HA2 chain</fullName>
        </recommendedName>
    </component>
</protein>